<proteinExistence type="inferred from homology"/>
<feature type="chain" id="PRO_0000183921" description="Cytochrome bd-I ubiquinol oxidase subunit 1">
    <location>
        <begin position="1"/>
        <end position="522"/>
    </location>
</feature>
<feature type="topological domain" description="Cytoplasmic" evidence="4">
    <location>
        <begin position="1"/>
        <end position="22"/>
    </location>
</feature>
<feature type="transmembrane region" description="Helical" evidence="4">
    <location>
        <begin position="23"/>
        <end position="42"/>
    </location>
</feature>
<feature type="topological domain" description="Periplasmic" evidence="4">
    <location>
        <begin position="43"/>
        <end position="94"/>
    </location>
</feature>
<feature type="transmembrane region" description="Helical" evidence="4">
    <location>
        <begin position="95"/>
        <end position="114"/>
    </location>
</feature>
<feature type="topological domain" description="Cytoplasmic" evidence="4">
    <location>
        <begin position="115"/>
        <end position="129"/>
    </location>
</feature>
<feature type="transmembrane region" description="Helical" evidence="4">
    <location>
        <begin position="130"/>
        <end position="149"/>
    </location>
</feature>
<feature type="topological domain" description="Periplasmic" evidence="4">
    <location>
        <begin position="150"/>
        <end position="187"/>
    </location>
</feature>
<feature type="transmembrane region" description="Helical" evidence="4">
    <location>
        <begin position="188"/>
        <end position="207"/>
    </location>
</feature>
<feature type="topological domain" description="Cytoplasmic" evidence="4">
    <location>
        <begin position="208"/>
        <end position="219"/>
    </location>
</feature>
<feature type="transmembrane region" description="Helical" evidence="4">
    <location>
        <begin position="220"/>
        <end position="239"/>
    </location>
</feature>
<feature type="topological domain" description="Periplasmic" evidence="4">
    <location>
        <begin position="240"/>
        <end position="392"/>
    </location>
</feature>
<feature type="transmembrane region" description="Helical" evidence="4">
    <location>
        <begin position="393"/>
        <end position="412"/>
    </location>
</feature>
<feature type="topological domain" description="Cytoplasmic" evidence="4">
    <location>
        <begin position="413"/>
        <end position="470"/>
    </location>
</feature>
<feature type="transmembrane region" description="Helical" evidence="4">
    <location>
        <begin position="471"/>
        <end position="490"/>
    </location>
</feature>
<feature type="topological domain" description="Periplasmic" evidence="4">
    <location>
        <begin position="491"/>
        <end position="522"/>
    </location>
</feature>
<feature type="binding site" description="axial binding residue" evidence="3">
    <location>
        <position position="19"/>
    </location>
    <ligand>
        <name>heme b</name>
        <dbReference type="ChEBI" id="CHEBI:60344"/>
        <label>b595</label>
    </ligand>
    <ligandPart>
        <name>Fe</name>
        <dbReference type="ChEBI" id="CHEBI:18248"/>
    </ligandPart>
</feature>
<feature type="binding site" description="axial binding residue" evidence="1">
    <location>
        <position position="186"/>
    </location>
    <ligand>
        <name>heme b</name>
        <dbReference type="ChEBI" id="CHEBI:60344"/>
        <label>b558</label>
    </ligand>
    <ligandPart>
        <name>Fe</name>
        <dbReference type="ChEBI" id="CHEBI:18248"/>
    </ligandPart>
</feature>
<feature type="binding site" description="axial binding residue" evidence="1">
    <location>
        <position position="393"/>
    </location>
    <ligand>
        <name>heme b</name>
        <dbReference type="ChEBI" id="CHEBI:60344"/>
        <label>b558</label>
    </ligand>
    <ligandPart>
        <name>Fe</name>
        <dbReference type="ChEBI" id="CHEBI:18248"/>
    </ligandPart>
</feature>
<feature type="modified residue" description="N-formylmethionine" evidence="1">
    <location>
        <position position="1"/>
    </location>
</feature>
<feature type="sequence conflict" description="In Ref. 2; AAP16081." evidence="4" ref="2">
    <original>A</original>
    <variation>T</variation>
    <location>
        <position position="339"/>
    </location>
</feature>
<keyword id="KW-0997">Cell inner membrane</keyword>
<keyword id="KW-1003">Cell membrane</keyword>
<keyword id="KW-0249">Electron transport</keyword>
<keyword id="KW-0291">Formylation</keyword>
<keyword id="KW-0349">Heme</keyword>
<keyword id="KW-0408">Iron</keyword>
<keyword id="KW-0472">Membrane</keyword>
<keyword id="KW-0479">Metal-binding</keyword>
<keyword id="KW-1185">Reference proteome</keyword>
<keyword id="KW-1278">Translocase</keyword>
<keyword id="KW-0812">Transmembrane</keyword>
<keyword id="KW-1133">Transmembrane helix</keyword>
<keyword id="KW-0813">Transport</keyword>
<organism>
    <name type="scientific">Shigella flexneri</name>
    <dbReference type="NCBI Taxonomy" id="623"/>
    <lineage>
        <taxon>Bacteria</taxon>
        <taxon>Pseudomonadati</taxon>
        <taxon>Pseudomonadota</taxon>
        <taxon>Gammaproteobacteria</taxon>
        <taxon>Enterobacterales</taxon>
        <taxon>Enterobacteriaceae</taxon>
        <taxon>Shigella</taxon>
    </lineage>
</organism>
<dbReference type="EC" id="7.1.1.7" evidence="2"/>
<dbReference type="EMBL" id="AE005674">
    <property type="protein sequence ID" value="AAN42208.1"/>
    <property type="status" value="ALT_INIT"/>
    <property type="molecule type" value="Genomic_DNA"/>
</dbReference>
<dbReference type="EMBL" id="AE014073">
    <property type="protein sequence ID" value="AAP16081.1"/>
    <property type="status" value="ALT_INIT"/>
    <property type="molecule type" value="Genomic_DNA"/>
</dbReference>
<dbReference type="RefSeq" id="NP_706501.1">
    <property type="nucleotide sequence ID" value="NC_004337.2"/>
</dbReference>
<dbReference type="RefSeq" id="WP_000884361.1">
    <property type="nucleotide sequence ID" value="NZ_UIPM01000010.1"/>
</dbReference>
<dbReference type="SMR" id="P0ABK1"/>
<dbReference type="STRING" id="198214.SF0564"/>
<dbReference type="PaxDb" id="198214-SF0564"/>
<dbReference type="GeneID" id="1023517"/>
<dbReference type="GeneID" id="93776752"/>
<dbReference type="KEGG" id="sfl:SF0564"/>
<dbReference type="KEGG" id="sfx:S0577"/>
<dbReference type="PATRIC" id="fig|198214.7.peg.654"/>
<dbReference type="HOGENOM" id="CLU_030555_0_1_6"/>
<dbReference type="UniPathway" id="UPA00705"/>
<dbReference type="Proteomes" id="UP000001006">
    <property type="component" value="Chromosome"/>
</dbReference>
<dbReference type="Proteomes" id="UP000002673">
    <property type="component" value="Chromosome"/>
</dbReference>
<dbReference type="GO" id="GO:0070069">
    <property type="term" value="C:cytochrome complex"/>
    <property type="evidence" value="ECO:0007669"/>
    <property type="project" value="InterPro"/>
</dbReference>
<dbReference type="GO" id="GO:0005886">
    <property type="term" value="C:plasma membrane"/>
    <property type="evidence" value="ECO:0007669"/>
    <property type="project" value="UniProtKB-SubCell"/>
</dbReference>
<dbReference type="GO" id="GO:0009055">
    <property type="term" value="F:electron transfer activity"/>
    <property type="evidence" value="ECO:0007669"/>
    <property type="project" value="InterPro"/>
</dbReference>
<dbReference type="GO" id="GO:0020037">
    <property type="term" value="F:heme binding"/>
    <property type="evidence" value="ECO:0007669"/>
    <property type="project" value="TreeGrafter"/>
</dbReference>
<dbReference type="GO" id="GO:0046872">
    <property type="term" value="F:metal ion binding"/>
    <property type="evidence" value="ECO:0007669"/>
    <property type="project" value="UniProtKB-KW"/>
</dbReference>
<dbReference type="GO" id="GO:0016682">
    <property type="term" value="F:oxidoreductase activity, acting on diphenols and related substances as donors, oxygen as acceptor"/>
    <property type="evidence" value="ECO:0007669"/>
    <property type="project" value="TreeGrafter"/>
</dbReference>
<dbReference type="GO" id="GO:0019646">
    <property type="term" value="P:aerobic electron transport chain"/>
    <property type="evidence" value="ECO:0007669"/>
    <property type="project" value="InterPro"/>
</dbReference>
<dbReference type="InterPro" id="IPR002585">
    <property type="entry name" value="Cyt-d_ubiquinol_oxidase_su_1"/>
</dbReference>
<dbReference type="NCBIfam" id="NF011677">
    <property type="entry name" value="PRK15097.1"/>
    <property type="match status" value="1"/>
</dbReference>
<dbReference type="PANTHER" id="PTHR30365:SF0">
    <property type="entry name" value="CYTOCHROME BD-I UBIQUINOL OXIDASE SUBUNIT 1"/>
    <property type="match status" value="1"/>
</dbReference>
<dbReference type="PANTHER" id="PTHR30365">
    <property type="entry name" value="CYTOCHROME D UBIQUINOL OXIDASE"/>
    <property type="match status" value="1"/>
</dbReference>
<dbReference type="Pfam" id="PF01654">
    <property type="entry name" value="Cyt_bd_oxida_I"/>
    <property type="match status" value="1"/>
</dbReference>
<dbReference type="PIRSF" id="PIRSF006446">
    <property type="entry name" value="Cyt_quinol_oxidase_1"/>
    <property type="match status" value="1"/>
</dbReference>
<reference key="1">
    <citation type="journal article" date="2002" name="Nucleic Acids Res.">
        <title>Genome sequence of Shigella flexneri 2a: insights into pathogenicity through comparison with genomes of Escherichia coli K12 and O157.</title>
        <authorList>
            <person name="Jin Q."/>
            <person name="Yuan Z."/>
            <person name="Xu J."/>
            <person name="Wang Y."/>
            <person name="Shen Y."/>
            <person name="Lu W."/>
            <person name="Wang J."/>
            <person name="Liu H."/>
            <person name="Yang J."/>
            <person name="Yang F."/>
            <person name="Zhang X."/>
            <person name="Zhang J."/>
            <person name="Yang G."/>
            <person name="Wu H."/>
            <person name="Qu D."/>
            <person name="Dong J."/>
            <person name="Sun L."/>
            <person name="Xue Y."/>
            <person name="Zhao A."/>
            <person name="Gao Y."/>
            <person name="Zhu J."/>
            <person name="Kan B."/>
            <person name="Ding K."/>
            <person name="Chen S."/>
            <person name="Cheng H."/>
            <person name="Yao Z."/>
            <person name="He B."/>
            <person name="Chen R."/>
            <person name="Ma D."/>
            <person name="Qiang B."/>
            <person name="Wen Y."/>
            <person name="Hou Y."/>
            <person name="Yu J."/>
        </authorList>
    </citation>
    <scope>NUCLEOTIDE SEQUENCE [LARGE SCALE GENOMIC DNA]</scope>
    <source>
        <strain>301 / Serotype 2a</strain>
    </source>
</reference>
<reference key="2">
    <citation type="journal article" date="2003" name="Infect. Immun.">
        <title>Complete genome sequence and comparative genomics of Shigella flexneri serotype 2a strain 2457T.</title>
        <authorList>
            <person name="Wei J."/>
            <person name="Goldberg M.B."/>
            <person name="Burland V."/>
            <person name="Venkatesan M.M."/>
            <person name="Deng W."/>
            <person name="Fournier G."/>
            <person name="Mayhew G.F."/>
            <person name="Plunkett G. III"/>
            <person name="Rose D.J."/>
            <person name="Darling A."/>
            <person name="Mau B."/>
            <person name="Perna N.T."/>
            <person name="Payne S.M."/>
            <person name="Runyen-Janecky L.J."/>
            <person name="Zhou S."/>
            <person name="Schwartz D.C."/>
            <person name="Blattner F.R."/>
        </authorList>
    </citation>
    <scope>NUCLEOTIDE SEQUENCE [LARGE SCALE GENOMIC DNA]</scope>
    <source>
        <strain>ATCC 700930 / 2457T / Serotype 2a</strain>
    </source>
</reference>
<name>CYDA_SHIFL</name>
<accession>P0ABK1</accession>
<accession>P11026</accession>
<accession>P75754</accession>
<accession>P76823</accession>
<comment type="function">
    <text evidence="2">A terminal oxidase that produces a proton motive force by the vectorial transfer of protons across the inner membrane. It is the component of the aerobic respiratory chain of E.coli that predominates when cells are grown at low aeration. Generates a proton motive force using protons and electrons from opposite sides of the membrane to generate H(2)O, transferring 1 proton/electron.</text>
</comment>
<comment type="catalytic activity">
    <reaction evidence="2">
        <text>2 a ubiquinol + O2(in) + 4 H(+)(in) = 2 a ubiquinone + 2 H2O(in) + 4 H(+)(out)</text>
        <dbReference type="Rhea" id="RHEA:40527"/>
        <dbReference type="Rhea" id="RHEA-COMP:9565"/>
        <dbReference type="Rhea" id="RHEA-COMP:9566"/>
        <dbReference type="ChEBI" id="CHEBI:15377"/>
        <dbReference type="ChEBI" id="CHEBI:15378"/>
        <dbReference type="ChEBI" id="CHEBI:15379"/>
        <dbReference type="ChEBI" id="CHEBI:16389"/>
        <dbReference type="ChEBI" id="CHEBI:17976"/>
        <dbReference type="EC" id="7.1.1.7"/>
    </reaction>
</comment>
<comment type="cofactor">
    <cofactor evidence="2">
        <name>heme b</name>
        <dbReference type="ChEBI" id="CHEBI:60344"/>
    </cofactor>
    <text evidence="2">Binds 1 protoheme IX center (heme b558).</text>
</comment>
<comment type="cofactor">
    <cofactor evidence="2">
        <name>heme b</name>
        <dbReference type="ChEBI" id="CHEBI:60344"/>
    </cofactor>
    <text evidence="2">Binds 1 protoheme IX center (heme b595) per heterodimer, in conjunction with CydB.</text>
</comment>
<comment type="cofactor">
    <cofactor evidence="2">
        <name>heme d cis-diol</name>
        <dbReference type="ChEBI" id="CHEBI:62814"/>
    </cofactor>
    <text evidence="2">Binds 1 iron-chlorin (heme d or cytochrome d) per heterodimer, in conjunction with CydB.</text>
</comment>
<comment type="pathway">
    <text>Energy metabolism; oxidative phosphorylation.</text>
</comment>
<comment type="subunit">
    <text evidence="2">Heterodimer of subunits I and II.</text>
</comment>
<comment type="subcellular location">
    <subcellularLocation>
        <location evidence="2">Cell inner membrane</location>
        <topology evidence="2">Multi-pass membrane protein</topology>
    </subcellularLocation>
</comment>
<comment type="similarity">
    <text evidence="4">Belongs to the cytochrome ubiquinol oxidase subunit 1 family.</text>
</comment>
<comment type="sequence caution" evidence="4">
    <conflict type="erroneous initiation">
        <sequence resource="EMBL-CDS" id="AAN42208"/>
    </conflict>
    <text>Extended N-terminus.</text>
</comment>
<comment type="sequence caution" evidence="4">
    <conflict type="erroneous initiation">
        <sequence resource="EMBL-CDS" id="AAP16081"/>
    </conflict>
    <text>Extended N-terminus.</text>
</comment>
<sequence length="522" mass="58205">MLDIVELSRLQFALTAMYHFLFVPLTLGMAFLLAIMETVYVLSGKQIYKDMTKFWGKLFGINFALGVATGLTMEFQFGTNWSYYSHYVGDIFGAPLAIEGLMAFFLESTFVGLFFFGWDRLGKVQHMCVTWLVALGSNLSALWILVANGWMQNPIASDFNFETMRMEMVSFSELVLNPVAQVKFVHTVASGYVTGAMFILGISAWYMLKGRDFAFAKRSFAIAASFGMAAVLSVIVLGDESGYEMGDVQKTKLAAIEAEWETQPAPAAFTLFGIPDQEEETNKFAIQIPYALGIIATRSVDTPVIGLKELMVQHEERIRNGMKAYSLLEQLRSGSTDQAVRDQFNSMKKDLGYGLLLKRYTPNVADATEAQIQQATKDSIPRVAPLYFAFRIMVACGFLLLAIIALSFWSVIRNRIGEKKWLLRAALYGIPLPWIAVEAGWFVAEYGRQPWAIGEVLPTAVANSSLTAGDLIFSMVLICGLYTLFLVAELFLMFKFARLGPSSLKTGRYHFEQSSTTTQPAR</sequence>
<evidence type="ECO:0000250" key="1"/>
<evidence type="ECO:0000250" key="2">
    <source>
        <dbReference type="UniProtKB" id="P0ABJ9"/>
    </source>
</evidence>
<evidence type="ECO:0000255" key="3"/>
<evidence type="ECO:0000305" key="4"/>
<protein>
    <recommendedName>
        <fullName>Cytochrome bd-I ubiquinol oxidase subunit 1</fullName>
        <ecNumber evidence="2">7.1.1.7</ecNumber>
    </recommendedName>
    <alternativeName>
        <fullName>Cytochrome bd-I oxidase subunit I</fullName>
    </alternativeName>
    <alternativeName>
        <fullName>Cytochrome d ubiquinol oxidase subunit I</fullName>
    </alternativeName>
</protein>
<gene>
    <name type="primary">cydA</name>
    <name type="ordered locus">SF0564</name>
    <name type="ordered locus">S0577</name>
</gene>